<sequence length="61" mass="6647">MVKNTDDVSVSTPAKEGIMQGNGAWCVVGFPPCKDNKCYCCIGGRTHARYSTMAECRHACF</sequence>
<reference key="1">
    <citation type="journal article" date="2004" name="Plant Cell">
        <title>maternally expressed gene1 is a novel maize endosperm transfer cell-specific gene with a maternal parent-of-origin pattern of expression.</title>
        <authorList>
            <person name="Gutierrez-Marcos J.F."/>
            <person name="Costa L.M."/>
            <person name="Biderre-Petit C."/>
            <person name="Khbaya B."/>
            <person name="O'Sullivan D.M."/>
            <person name="Wormald M."/>
            <person name="Perez P."/>
            <person name="Dickinson H.G."/>
        </authorList>
    </citation>
    <scope>NUCLEOTIDE SEQUENCE [MRNA]</scope>
    <scope>TISSUE SPECIFICITY</scope>
    <scope>GENE FAMILY</scope>
    <scope>NOMENCLATURE</scope>
</reference>
<reference key="2">
    <citation type="journal article" date="2009" name="Science">
        <title>The B73 maize genome: complexity, diversity, and dynamics.</title>
        <authorList>
            <person name="Schnable P.S."/>
            <person name="Ware D."/>
            <person name="Fulton R.S."/>
            <person name="Stein J.C."/>
            <person name="Wei F."/>
            <person name="Pasternak S."/>
            <person name="Liang C."/>
            <person name="Zhang J."/>
            <person name="Fulton L."/>
            <person name="Graves T.A."/>
            <person name="Minx P."/>
            <person name="Reily A.D."/>
            <person name="Courtney L."/>
            <person name="Kruchowski S.S."/>
            <person name="Tomlinson C."/>
            <person name="Strong C."/>
            <person name="Delehaunty K."/>
            <person name="Fronick C."/>
            <person name="Courtney B."/>
            <person name="Rock S.M."/>
            <person name="Belter E."/>
            <person name="Du F."/>
            <person name="Kim K."/>
            <person name="Abbott R.M."/>
            <person name="Cotton M."/>
            <person name="Levy A."/>
            <person name="Marchetto P."/>
            <person name="Ochoa K."/>
            <person name="Jackson S.M."/>
            <person name="Gillam B."/>
            <person name="Chen W."/>
            <person name="Yan L."/>
            <person name="Higginbotham J."/>
            <person name="Cardenas M."/>
            <person name="Waligorski J."/>
            <person name="Applebaum E."/>
            <person name="Phelps L."/>
            <person name="Falcone J."/>
            <person name="Kanchi K."/>
            <person name="Thane T."/>
            <person name="Scimone A."/>
            <person name="Thane N."/>
            <person name="Henke J."/>
            <person name="Wang T."/>
            <person name="Ruppert J."/>
            <person name="Shah N."/>
            <person name="Rotter K."/>
            <person name="Hodges J."/>
            <person name="Ingenthron E."/>
            <person name="Cordes M."/>
            <person name="Kohlberg S."/>
            <person name="Sgro J."/>
            <person name="Delgado B."/>
            <person name="Mead K."/>
            <person name="Chinwalla A."/>
            <person name="Leonard S."/>
            <person name="Crouse K."/>
            <person name="Collura K."/>
            <person name="Kudrna D."/>
            <person name="Currie J."/>
            <person name="He R."/>
            <person name="Angelova A."/>
            <person name="Rajasekar S."/>
            <person name="Mueller T."/>
            <person name="Lomeli R."/>
            <person name="Scara G."/>
            <person name="Ko A."/>
            <person name="Delaney K."/>
            <person name="Wissotski M."/>
            <person name="Lopez G."/>
            <person name="Campos D."/>
            <person name="Braidotti M."/>
            <person name="Ashley E."/>
            <person name="Golser W."/>
            <person name="Kim H."/>
            <person name="Lee S."/>
            <person name="Lin J."/>
            <person name="Dujmic Z."/>
            <person name="Kim W."/>
            <person name="Talag J."/>
            <person name="Zuccolo A."/>
            <person name="Fan C."/>
            <person name="Sebastian A."/>
            <person name="Kramer M."/>
            <person name="Spiegel L."/>
            <person name="Nascimento L."/>
            <person name="Zutavern T."/>
            <person name="Miller B."/>
            <person name="Ambroise C."/>
            <person name="Muller S."/>
            <person name="Spooner W."/>
            <person name="Narechania A."/>
            <person name="Ren L."/>
            <person name="Wei S."/>
            <person name="Kumari S."/>
            <person name="Faga B."/>
            <person name="Levy M.J."/>
            <person name="McMahan L."/>
            <person name="Van Buren P."/>
            <person name="Vaughn M.W."/>
            <person name="Ying K."/>
            <person name="Yeh C.-T."/>
            <person name="Emrich S.J."/>
            <person name="Jia Y."/>
            <person name="Kalyanaraman A."/>
            <person name="Hsia A.-P."/>
            <person name="Barbazuk W.B."/>
            <person name="Baucom R.S."/>
            <person name="Brutnell T.P."/>
            <person name="Carpita N.C."/>
            <person name="Chaparro C."/>
            <person name="Chia J.-M."/>
            <person name="Deragon J.-M."/>
            <person name="Estill J.C."/>
            <person name="Fu Y."/>
            <person name="Jeddeloh J.A."/>
            <person name="Han Y."/>
            <person name="Lee H."/>
            <person name="Li P."/>
            <person name="Lisch D.R."/>
            <person name="Liu S."/>
            <person name="Liu Z."/>
            <person name="Nagel D.H."/>
            <person name="McCann M.C."/>
            <person name="SanMiguel P."/>
            <person name="Myers A.M."/>
            <person name="Nettleton D."/>
            <person name="Nguyen J."/>
            <person name="Penning B.W."/>
            <person name="Ponnala L."/>
            <person name="Schneider K.L."/>
            <person name="Schwartz D.C."/>
            <person name="Sharma A."/>
            <person name="Soderlund C."/>
            <person name="Springer N.M."/>
            <person name="Sun Q."/>
            <person name="Wang H."/>
            <person name="Waterman M."/>
            <person name="Westerman R."/>
            <person name="Wolfgruber T.K."/>
            <person name="Yang L."/>
            <person name="Yu Y."/>
            <person name="Zhang L."/>
            <person name="Zhou S."/>
            <person name="Zhu Q."/>
            <person name="Bennetzen J.L."/>
            <person name="Dawe R.K."/>
            <person name="Jiang J."/>
            <person name="Jiang N."/>
            <person name="Presting G.G."/>
            <person name="Wessler S.R."/>
            <person name="Aluru S."/>
            <person name="Martienssen R.A."/>
            <person name="Clifton S.W."/>
            <person name="McCombie W.R."/>
            <person name="Wing R.A."/>
            <person name="Wilson R.K."/>
        </authorList>
    </citation>
    <scope>NUCLEOTIDE SEQUENCE [LARGE SCALE GENOMIC DNA]</scope>
    <source>
        <strain>cv. B73</strain>
    </source>
</reference>
<evidence type="ECO:0000250" key="1"/>
<evidence type="ECO:0000269" key="2">
    <source>
    </source>
</evidence>
<evidence type="ECO:0000305" key="3"/>
<name>MEG6_MAIZE</name>
<accession>Q6JB10</accession>
<keyword id="KW-1015">Disulfide bond</keyword>
<keyword id="KW-1185">Reference proteome</keyword>
<protein>
    <recommendedName>
        <fullName>Protein MATERNALLY EXPRESSED GENE 6</fullName>
    </recommendedName>
</protein>
<organism>
    <name type="scientific">Zea mays</name>
    <name type="common">Maize</name>
    <dbReference type="NCBI Taxonomy" id="4577"/>
    <lineage>
        <taxon>Eukaryota</taxon>
        <taxon>Viridiplantae</taxon>
        <taxon>Streptophyta</taxon>
        <taxon>Embryophyta</taxon>
        <taxon>Tracheophyta</taxon>
        <taxon>Spermatophyta</taxon>
        <taxon>Magnoliopsida</taxon>
        <taxon>Liliopsida</taxon>
        <taxon>Poales</taxon>
        <taxon>Poaceae</taxon>
        <taxon>PACMAD clade</taxon>
        <taxon>Panicoideae</taxon>
        <taxon>Andropogonodae</taxon>
        <taxon>Andropogoneae</taxon>
        <taxon>Tripsacinae</taxon>
        <taxon>Zea</taxon>
    </lineage>
</organism>
<feature type="chain" id="PRO_0000430078" description="Protein MATERNALLY EXPRESSED GENE 6">
    <location>
        <begin position="1"/>
        <end position="61"/>
    </location>
</feature>
<feature type="disulfide bond" evidence="1">
    <location>
        <begin position="38"/>
        <end position="60"/>
    </location>
</feature>
<proteinExistence type="evidence at transcript level"/>
<comment type="tissue specificity">
    <text evidence="2">Ubiquitous.</text>
</comment>
<comment type="similarity">
    <text evidence="3">Belongs to the MEG family.</text>
</comment>
<dbReference type="EMBL" id="AY536126">
    <property type="protein sequence ID" value="AAT09815.1"/>
    <property type="molecule type" value="mRNA"/>
</dbReference>
<dbReference type="EMBL" id="AC207116">
    <property type="status" value="NOT_ANNOTATED_CDS"/>
    <property type="molecule type" value="Genomic_DNA"/>
</dbReference>
<dbReference type="SMR" id="Q6JB10"/>
<dbReference type="STRING" id="4577.Q6JB10"/>
<dbReference type="InParanoid" id="Q6JB10"/>
<dbReference type="Proteomes" id="UP000007305">
    <property type="component" value="Unplaced"/>
</dbReference>
<dbReference type="InterPro" id="IPR056205">
    <property type="entry name" value="Meg"/>
</dbReference>
<dbReference type="Pfam" id="PF24153">
    <property type="entry name" value="Meg"/>
    <property type="match status" value="1"/>
</dbReference>
<gene>
    <name type="primary">MEG6</name>
    <name evidence="3" type="ORF">GRMZM2G094054</name>
</gene>